<accession>C5D3N8</accession>
<comment type="function">
    <text evidence="1">Catalyzes the specific phosphorylation of arginine residues in a large number of proteins. Is part of the bacterial stress response system. Protein arginine phosphorylation has a physiologically important role and is involved in the regulation of many critical cellular processes, such as protein homeostasis, motility, competence, and stringent and stress responses, by regulating gene expression and protein activity.</text>
</comment>
<comment type="catalytic activity">
    <reaction evidence="1">
        <text>L-arginyl-[protein] + ATP = N(omega)-phospho-L-arginyl-[protein] + ADP + H(+)</text>
        <dbReference type="Rhea" id="RHEA:43384"/>
        <dbReference type="Rhea" id="RHEA-COMP:10532"/>
        <dbReference type="Rhea" id="RHEA-COMP:10533"/>
        <dbReference type="ChEBI" id="CHEBI:15378"/>
        <dbReference type="ChEBI" id="CHEBI:29965"/>
        <dbReference type="ChEBI" id="CHEBI:30616"/>
        <dbReference type="ChEBI" id="CHEBI:83226"/>
        <dbReference type="ChEBI" id="CHEBI:456216"/>
        <dbReference type="EC" id="2.7.14.1"/>
    </reaction>
</comment>
<comment type="activity regulation">
    <text evidence="1">Appears to be allosterically activated by the binding of pArg-containing polypeptides to the pArg-binding pocket localized in the C-terminal domain of McsB.</text>
</comment>
<comment type="similarity">
    <text evidence="1">Belongs to the ATP:guanido phosphotransferase family.</text>
</comment>
<name>MCSB_GEOSW</name>
<organism>
    <name type="scientific">Geobacillus sp. (strain WCH70)</name>
    <dbReference type="NCBI Taxonomy" id="471223"/>
    <lineage>
        <taxon>Bacteria</taxon>
        <taxon>Bacillati</taxon>
        <taxon>Bacillota</taxon>
        <taxon>Bacilli</taxon>
        <taxon>Bacillales</taxon>
        <taxon>Anoxybacillaceae</taxon>
        <taxon>Geobacillus</taxon>
    </lineage>
</organism>
<feature type="chain" id="PRO_1000212218" description="Protein-arginine kinase">
    <location>
        <begin position="1"/>
        <end position="362"/>
    </location>
</feature>
<feature type="domain" description="Phosphagen kinase C-terminal" evidence="1">
    <location>
        <begin position="24"/>
        <end position="255"/>
    </location>
</feature>
<feature type="short sequence motif" description="RDXXRA motif of the pArg binding pocket involved in allosteric regulation" evidence="1">
    <location>
        <begin position="338"/>
        <end position="343"/>
    </location>
</feature>
<feature type="binding site" evidence="1">
    <location>
        <begin position="27"/>
        <end position="31"/>
    </location>
    <ligand>
        <name>ATP</name>
        <dbReference type="ChEBI" id="CHEBI:30616"/>
    </ligand>
</feature>
<feature type="binding site" evidence="1">
    <location>
        <position position="92"/>
    </location>
    <ligand>
        <name>ATP</name>
        <dbReference type="ChEBI" id="CHEBI:30616"/>
    </ligand>
</feature>
<feature type="binding site" evidence="1">
    <location>
        <position position="126"/>
    </location>
    <ligand>
        <name>ATP</name>
        <dbReference type="ChEBI" id="CHEBI:30616"/>
    </ligand>
</feature>
<feature type="binding site" evidence="1">
    <location>
        <begin position="177"/>
        <end position="181"/>
    </location>
    <ligand>
        <name>ATP</name>
        <dbReference type="ChEBI" id="CHEBI:30616"/>
    </ligand>
</feature>
<feature type="binding site" evidence="1">
    <location>
        <begin position="208"/>
        <end position="213"/>
    </location>
    <ligand>
        <name>ATP</name>
        <dbReference type="ChEBI" id="CHEBI:30616"/>
    </ligand>
</feature>
<protein>
    <recommendedName>
        <fullName evidence="1">Protein-arginine kinase</fullName>
        <ecNumber evidence="1">2.7.14.1</ecNumber>
    </recommendedName>
</protein>
<evidence type="ECO:0000255" key="1">
    <source>
        <dbReference type="HAMAP-Rule" id="MF_00602"/>
    </source>
</evidence>
<reference key="1">
    <citation type="submission" date="2009-06" db="EMBL/GenBank/DDBJ databases">
        <title>Complete sequence of chromosome of Geopacillus sp. WCH70.</title>
        <authorList>
            <consortium name="US DOE Joint Genome Institute"/>
            <person name="Lucas S."/>
            <person name="Copeland A."/>
            <person name="Lapidus A."/>
            <person name="Glavina del Rio T."/>
            <person name="Dalin E."/>
            <person name="Tice H."/>
            <person name="Bruce D."/>
            <person name="Goodwin L."/>
            <person name="Pitluck S."/>
            <person name="Chertkov O."/>
            <person name="Brettin T."/>
            <person name="Detter J.C."/>
            <person name="Han C."/>
            <person name="Larimer F."/>
            <person name="Land M."/>
            <person name="Hauser L."/>
            <person name="Kyrpides N."/>
            <person name="Mikhailova N."/>
            <person name="Brumm P."/>
            <person name="Mead D.A."/>
            <person name="Richardson P."/>
        </authorList>
    </citation>
    <scope>NUCLEOTIDE SEQUENCE [LARGE SCALE GENOMIC DNA]</scope>
    <source>
        <strain>WCH70</strain>
    </source>
</reference>
<gene>
    <name evidence="1" type="primary">mcsB</name>
    <name type="ordered locus">GWCH70_0082</name>
</gene>
<keyword id="KW-0021">Allosteric enzyme</keyword>
<keyword id="KW-0067">ATP-binding</keyword>
<keyword id="KW-0418">Kinase</keyword>
<keyword id="KW-0547">Nucleotide-binding</keyword>
<keyword id="KW-0808">Transferase</keyword>
<proteinExistence type="inferred from homology"/>
<dbReference type="EC" id="2.7.14.1" evidence="1"/>
<dbReference type="EMBL" id="CP001638">
    <property type="protein sequence ID" value="ACS23022.1"/>
    <property type="molecule type" value="Genomic_DNA"/>
</dbReference>
<dbReference type="SMR" id="C5D3N8"/>
<dbReference type="STRING" id="471223.GWCH70_0082"/>
<dbReference type="KEGG" id="gwc:GWCH70_0082"/>
<dbReference type="eggNOG" id="COG3869">
    <property type="taxonomic scope" value="Bacteria"/>
</dbReference>
<dbReference type="HOGENOM" id="CLU_066591_1_0_9"/>
<dbReference type="OrthoDB" id="9791353at2"/>
<dbReference type="GO" id="GO:0005615">
    <property type="term" value="C:extracellular space"/>
    <property type="evidence" value="ECO:0007669"/>
    <property type="project" value="TreeGrafter"/>
</dbReference>
<dbReference type="GO" id="GO:0005524">
    <property type="term" value="F:ATP binding"/>
    <property type="evidence" value="ECO:0007669"/>
    <property type="project" value="UniProtKB-KW"/>
</dbReference>
<dbReference type="GO" id="GO:0004111">
    <property type="term" value="F:creatine kinase activity"/>
    <property type="evidence" value="ECO:0007669"/>
    <property type="project" value="InterPro"/>
</dbReference>
<dbReference type="GO" id="GO:0004672">
    <property type="term" value="F:protein kinase activity"/>
    <property type="evidence" value="ECO:0007669"/>
    <property type="project" value="UniProtKB-UniRule"/>
</dbReference>
<dbReference type="GO" id="GO:0046314">
    <property type="term" value="P:phosphocreatine biosynthetic process"/>
    <property type="evidence" value="ECO:0007669"/>
    <property type="project" value="InterPro"/>
</dbReference>
<dbReference type="CDD" id="cd07930">
    <property type="entry name" value="bacterial_phosphagen_kinase"/>
    <property type="match status" value="1"/>
</dbReference>
<dbReference type="FunFam" id="3.30.590.10:FF:000007">
    <property type="entry name" value="Protein-arginine kinase"/>
    <property type="match status" value="1"/>
</dbReference>
<dbReference type="Gene3D" id="3.30.590.10">
    <property type="entry name" value="Glutamine synthetase/guanido kinase, catalytic domain"/>
    <property type="match status" value="1"/>
</dbReference>
<dbReference type="HAMAP" id="MF_00602">
    <property type="entry name" value="Prot_Arg_kinase"/>
    <property type="match status" value="1"/>
</dbReference>
<dbReference type="InterPro" id="IPR023660">
    <property type="entry name" value="Arg_Kinase"/>
</dbReference>
<dbReference type="InterPro" id="IPR000749">
    <property type="entry name" value="ATP-guanido_PTrfase"/>
</dbReference>
<dbReference type="InterPro" id="IPR022415">
    <property type="entry name" value="ATP-guanido_PTrfase_AS"/>
</dbReference>
<dbReference type="InterPro" id="IPR022414">
    <property type="entry name" value="ATP-guanido_PTrfase_cat"/>
</dbReference>
<dbReference type="InterPro" id="IPR014746">
    <property type="entry name" value="Gln_synth/guanido_kin_cat_dom"/>
</dbReference>
<dbReference type="NCBIfam" id="NF002194">
    <property type="entry name" value="PRK01059.1-4"/>
    <property type="match status" value="1"/>
</dbReference>
<dbReference type="NCBIfam" id="NF002195">
    <property type="entry name" value="PRK01059.1-5"/>
    <property type="match status" value="1"/>
</dbReference>
<dbReference type="PANTHER" id="PTHR11547:SF38">
    <property type="entry name" value="ARGININE KINASE 1-RELATED"/>
    <property type="match status" value="1"/>
</dbReference>
<dbReference type="PANTHER" id="PTHR11547">
    <property type="entry name" value="ARGININE OR CREATINE KINASE"/>
    <property type="match status" value="1"/>
</dbReference>
<dbReference type="Pfam" id="PF00217">
    <property type="entry name" value="ATP-gua_Ptrans"/>
    <property type="match status" value="1"/>
</dbReference>
<dbReference type="SUPFAM" id="SSF55931">
    <property type="entry name" value="Glutamine synthetase/guanido kinase"/>
    <property type="match status" value="1"/>
</dbReference>
<dbReference type="PROSITE" id="PS00112">
    <property type="entry name" value="PHOSPHAGEN_KINASE"/>
    <property type="match status" value="1"/>
</dbReference>
<dbReference type="PROSITE" id="PS51510">
    <property type="entry name" value="PHOSPHAGEN_KINASE_C"/>
    <property type="match status" value="1"/>
</dbReference>
<sequence length="362" mass="41133">MSFEKFFNTAVSSWMSQEGPDSDIVLSSRIRLARNIVDFQFPTVFNNEEAQQIVSLFEQTFAHRFYPSVGRFELLKMSELQPIEKRVLVEKHLISPHLAEDSPFGACLLSENEEISIMINEEDHIRIQCLFPGLQLTEALKVANELDDWIEEHVNYAFDEKLGYLTSCPTNVGTGMRASVMMHLPALVLTQQINRIIPAINQLGLVVRGTYGEGSEALGNIFQISNQITLGKSEEDIVEDLKSVVQQLIAQERMARETLVKTLNIQLEDRVFRSYGILANSRVIESKEAAQCLSDVRLGIDLGYIKNISRNILNELMILTQPGFLQQYAGGVLRPEERDVRRAALIRERLKMEERKAMEGDE</sequence>